<evidence type="ECO:0000255" key="1">
    <source>
        <dbReference type="HAMAP-Rule" id="MF_00270"/>
    </source>
</evidence>
<evidence type="ECO:0000256" key="2">
    <source>
        <dbReference type="SAM" id="MobiDB-lite"/>
    </source>
</evidence>
<evidence type="ECO:0000305" key="3"/>
<organism>
    <name type="scientific">Brucella suis biovar 1 (strain 1330)</name>
    <dbReference type="NCBI Taxonomy" id="204722"/>
    <lineage>
        <taxon>Bacteria</taxon>
        <taxon>Pseudomonadati</taxon>
        <taxon>Pseudomonadota</taxon>
        <taxon>Alphaproteobacteria</taxon>
        <taxon>Hyphomicrobiales</taxon>
        <taxon>Brucellaceae</taxon>
        <taxon>Brucella/Ochrobactrum group</taxon>
        <taxon>Brucella</taxon>
    </lineage>
</organism>
<name>RS18_BRUSU</name>
<sequence>MVDINQIPTRRPFHRRRKTCPFSGANAPKIDYKDVKLLQRYISERGKIVPSRITAVSQKKQRELAKAIKRARFLGLLPYVVK</sequence>
<accession>P66454</accession>
<accession>G0K703</accession>
<accession>Q8YFN9</accession>
<proteinExistence type="inferred from homology"/>
<feature type="chain" id="PRO_0000111129" description="Small ribosomal subunit protein bS18">
    <location>
        <begin position="1"/>
        <end position="82"/>
    </location>
</feature>
<feature type="region of interest" description="Disordered" evidence="2">
    <location>
        <begin position="1"/>
        <end position="20"/>
    </location>
</feature>
<gene>
    <name evidence="1" type="primary">rpsR</name>
    <name type="ordered locus">BR0454</name>
    <name type="ordered locus">BS1330_I0455</name>
</gene>
<protein>
    <recommendedName>
        <fullName evidence="1">Small ribosomal subunit protein bS18</fullName>
    </recommendedName>
    <alternativeName>
        <fullName evidence="3">30S ribosomal protein S18</fullName>
    </alternativeName>
</protein>
<keyword id="KW-0687">Ribonucleoprotein</keyword>
<keyword id="KW-0689">Ribosomal protein</keyword>
<keyword id="KW-0694">RNA-binding</keyword>
<keyword id="KW-0699">rRNA-binding</keyword>
<reference key="1">
    <citation type="journal article" date="2002" name="Proc. Natl. Acad. Sci. U.S.A.">
        <title>The Brucella suis genome reveals fundamental similarities between animal and plant pathogens and symbionts.</title>
        <authorList>
            <person name="Paulsen I.T."/>
            <person name="Seshadri R."/>
            <person name="Nelson K.E."/>
            <person name="Eisen J.A."/>
            <person name="Heidelberg J.F."/>
            <person name="Read T.D."/>
            <person name="Dodson R.J."/>
            <person name="Umayam L.A."/>
            <person name="Brinkac L.M."/>
            <person name="Beanan M.J."/>
            <person name="Daugherty S.C."/>
            <person name="DeBoy R.T."/>
            <person name="Durkin A.S."/>
            <person name="Kolonay J.F."/>
            <person name="Madupu R."/>
            <person name="Nelson W.C."/>
            <person name="Ayodeji B."/>
            <person name="Kraul M."/>
            <person name="Shetty J."/>
            <person name="Malek J.A."/>
            <person name="Van Aken S.E."/>
            <person name="Riedmuller S."/>
            <person name="Tettelin H."/>
            <person name="Gill S.R."/>
            <person name="White O."/>
            <person name="Salzberg S.L."/>
            <person name="Hoover D.L."/>
            <person name="Lindler L.E."/>
            <person name="Halling S.M."/>
            <person name="Boyle S.M."/>
            <person name="Fraser C.M."/>
        </authorList>
    </citation>
    <scope>NUCLEOTIDE SEQUENCE [LARGE SCALE GENOMIC DNA]</scope>
    <source>
        <strain>1330</strain>
    </source>
</reference>
<reference key="2">
    <citation type="journal article" date="2011" name="J. Bacteriol.">
        <title>Revised genome sequence of Brucella suis 1330.</title>
        <authorList>
            <person name="Tae H."/>
            <person name="Shallom S."/>
            <person name="Settlage R."/>
            <person name="Preston D."/>
            <person name="Adams L.G."/>
            <person name="Garner H.R."/>
        </authorList>
    </citation>
    <scope>NUCLEOTIDE SEQUENCE [LARGE SCALE GENOMIC DNA]</scope>
    <source>
        <strain>1330</strain>
    </source>
</reference>
<comment type="function">
    <text evidence="1">Binds as a heterodimer with protein bS6 to the central domain of the 16S rRNA, where it helps stabilize the platform of the 30S subunit.</text>
</comment>
<comment type="subunit">
    <text evidence="1">Part of the 30S ribosomal subunit. Forms a tight heterodimer with protein bS6.</text>
</comment>
<comment type="similarity">
    <text evidence="1">Belongs to the bacterial ribosomal protein bS18 family.</text>
</comment>
<dbReference type="EMBL" id="AE014291">
    <property type="protein sequence ID" value="AAN29397.1"/>
    <property type="molecule type" value="Genomic_DNA"/>
</dbReference>
<dbReference type="EMBL" id="CP002997">
    <property type="protein sequence ID" value="AEM17810.1"/>
    <property type="molecule type" value="Genomic_DNA"/>
</dbReference>
<dbReference type="RefSeq" id="WP_002963610.1">
    <property type="nucleotide sequence ID" value="NZ_KN046804.1"/>
</dbReference>
<dbReference type="SMR" id="P66454"/>
<dbReference type="GeneID" id="97914641"/>
<dbReference type="KEGG" id="bms:BR0454"/>
<dbReference type="KEGG" id="bsi:BS1330_I0455"/>
<dbReference type="PATRIC" id="fig|204722.21.peg.1410"/>
<dbReference type="HOGENOM" id="CLU_148710_2_2_5"/>
<dbReference type="Proteomes" id="UP000007104">
    <property type="component" value="Chromosome I"/>
</dbReference>
<dbReference type="GO" id="GO:0022627">
    <property type="term" value="C:cytosolic small ribosomal subunit"/>
    <property type="evidence" value="ECO:0007669"/>
    <property type="project" value="TreeGrafter"/>
</dbReference>
<dbReference type="GO" id="GO:0070181">
    <property type="term" value="F:small ribosomal subunit rRNA binding"/>
    <property type="evidence" value="ECO:0007669"/>
    <property type="project" value="TreeGrafter"/>
</dbReference>
<dbReference type="GO" id="GO:0003735">
    <property type="term" value="F:structural constituent of ribosome"/>
    <property type="evidence" value="ECO:0007669"/>
    <property type="project" value="InterPro"/>
</dbReference>
<dbReference type="GO" id="GO:0006412">
    <property type="term" value="P:translation"/>
    <property type="evidence" value="ECO:0007669"/>
    <property type="project" value="UniProtKB-UniRule"/>
</dbReference>
<dbReference type="Gene3D" id="4.10.640.10">
    <property type="entry name" value="Ribosomal protein S18"/>
    <property type="match status" value="1"/>
</dbReference>
<dbReference type="HAMAP" id="MF_00270">
    <property type="entry name" value="Ribosomal_bS18"/>
    <property type="match status" value="1"/>
</dbReference>
<dbReference type="InterPro" id="IPR001648">
    <property type="entry name" value="Ribosomal_bS18"/>
</dbReference>
<dbReference type="InterPro" id="IPR018275">
    <property type="entry name" value="Ribosomal_bS18_CS"/>
</dbReference>
<dbReference type="InterPro" id="IPR036870">
    <property type="entry name" value="Ribosomal_bS18_sf"/>
</dbReference>
<dbReference type="NCBIfam" id="TIGR00165">
    <property type="entry name" value="S18"/>
    <property type="match status" value="1"/>
</dbReference>
<dbReference type="PANTHER" id="PTHR13479">
    <property type="entry name" value="30S RIBOSOMAL PROTEIN S18"/>
    <property type="match status" value="1"/>
</dbReference>
<dbReference type="PANTHER" id="PTHR13479:SF40">
    <property type="entry name" value="SMALL RIBOSOMAL SUBUNIT PROTEIN BS18M"/>
    <property type="match status" value="1"/>
</dbReference>
<dbReference type="Pfam" id="PF01084">
    <property type="entry name" value="Ribosomal_S18"/>
    <property type="match status" value="1"/>
</dbReference>
<dbReference type="PRINTS" id="PR00974">
    <property type="entry name" value="RIBOSOMALS18"/>
</dbReference>
<dbReference type="SUPFAM" id="SSF46911">
    <property type="entry name" value="Ribosomal protein S18"/>
    <property type="match status" value="1"/>
</dbReference>
<dbReference type="PROSITE" id="PS00057">
    <property type="entry name" value="RIBOSOMAL_S18"/>
    <property type="match status" value="1"/>
</dbReference>